<evidence type="ECO:0000255" key="1">
    <source>
        <dbReference type="HAMAP-Rule" id="MF_01367"/>
    </source>
</evidence>
<evidence type="ECO:0000305" key="2"/>
<dbReference type="EMBL" id="AE004969">
    <property type="protein sequence ID" value="AAW90450.1"/>
    <property type="molecule type" value="Genomic_DNA"/>
</dbReference>
<dbReference type="RefSeq" id="WP_003690075.1">
    <property type="nucleotide sequence ID" value="NC_002946.2"/>
</dbReference>
<dbReference type="RefSeq" id="YP_208862.1">
    <property type="nucleotide sequence ID" value="NC_002946.2"/>
</dbReference>
<dbReference type="SMR" id="Q5F5T7"/>
<dbReference type="STRING" id="242231.NGO_1829"/>
<dbReference type="GeneID" id="66754305"/>
<dbReference type="KEGG" id="ngo:NGO_1829"/>
<dbReference type="PATRIC" id="fig|242231.10.peg.2199"/>
<dbReference type="HOGENOM" id="CLU_095071_2_1_4"/>
<dbReference type="Proteomes" id="UP000000535">
    <property type="component" value="Chromosome"/>
</dbReference>
<dbReference type="GO" id="GO:0022625">
    <property type="term" value="C:cytosolic large ribosomal subunit"/>
    <property type="evidence" value="ECO:0007669"/>
    <property type="project" value="TreeGrafter"/>
</dbReference>
<dbReference type="GO" id="GO:0070180">
    <property type="term" value="F:large ribosomal subunit rRNA binding"/>
    <property type="evidence" value="ECO:0007669"/>
    <property type="project" value="TreeGrafter"/>
</dbReference>
<dbReference type="GO" id="GO:0003735">
    <property type="term" value="F:structural constituent of ribosome"/>
    <property type="evidence" value="ECO:0007669"/>
    <property type="project" value="InterPro"/>
</dbReference>
<dbReference type="GO" id="GO:0006412">
    <property type="term" value="P:translation"/>
    <property type="evidence" value="ECO:0007669"/>
    <property type="project" value="UniProtKB-UniRule"/>
</dbReference>
<dbReference type="CDD" id="cd00337">
    <property type="entry name" value="Ribosomal_uL14"/>
    <property type="match status" value="1"/>
</dbReference>
<dbReference type="FunFam" id="2.40.150.20:FF:000001">
    <property type="entry name" value="50S ribosomal protein L14"/>
    <property type="match status" value="1"/>
</dbReference>
<dbReference type="Gene3D" id="2.40.150.20">
    <property type="entry name" value="Ribosomal protein L14"/>
    <property type="match status" value="1"/>
</dbReference>
<dbReference type="HAMAP" id="MF_01367">
    <property type="entry name" value="Ribosomal_uL14"/>
    <property type="match status" value="1"/>
</dbReference>
<dbReference type="InterPro" id="IPR000218">
    <property type="entry name" value="Ribosomal_uL14"/>
</dbReference>
<dbReference type="InterPro" id="IPR005745">
    <property type="entry name" value="Ribosomal_uL14_bac-type"/>
</dbReference>
<dbReference type="InterPro" id="IPR019972">
    <property type="entry name" value="Ribosomal_uL14_CS"/>
</dbReference>
<dbReference type="InterPro" id="IPR036853">
    <property type="entry name" value="Ribosomal_uL14_sf"/>
</dbReference>
<dbReference type="NCBIfam" id="TIGR01067">
    <property type="entry name" value="rplN_bact"/>
    <property type="match status" value="1"/>
</dbReference>
<dbReference type="PANTHER" id="PTHR11761">
    <property type="entry name" value="50S/60S RIBOSOMAL PROTEIN L14/L23"/>
    <property type="match status" value="1"/>
</dbReference>
<dbReference type="PANTHER" id="PTHR11761:SF3">
    <property type="entry name" value="LARGE RIBOSOMAL SUBUNIT PROTEIN UL14M"/>
    <property type="match status" value="1"/>
</dbReference>
<dbReference type="Pfam" id="PF00238">
    <property type="entry name" value="Ribosomal_L14"/>
    <property type="match status" value="1"/>
</dbReference>
<dbReference type="SMART" id="SM01374">
    <property type="entry name" value="Ribosomal_L14"/>
    <property type="match status" value="1"/>
</dbReference>
<dbReference type="SUPFAM" id="SSF50193">
    <property type="entry name" value="Ribosomal protein L14"/>
    <property type="match status" value="1"/>
</dbReference>
<dbReference type="PROSITE" id="PS00049">
    <property type="entry name" value="RIBOSOMAL_L14"/>
    <property type="match status" value="1"/>
</dbReference>
<organism>
    <name type="scientific">Neisseria gonorrhoeae (strain ATCC 700825 / FA 1090)</name>
    <dbReference type="NCBI Taxonomy" id="242231"/>
    <lineage>
        <taxon>Bacteria</taxon>
        <taxon>Pseudomonadati</taxon>
        <taxon>Pseudomonadota</taxon>
        <taxon>Betaproteobacteria</taxon>
        <taxon>Neisseriales</taxon>
        <taxon>Neisseriaceae</taxon>
        <taxon>Neisseria</taxon>
    </lineage>
</organism>
<protein>
    <recommendedName>
        <fullName evidence="1">Large ribosomal subunit protein uL14</fullName>
    </recommendedName>
    <alternativeName>
        <fullName evidence="2">50S ribosomal protein L14</fullName>
    </alternativeName>
</protein>
<reference key="1">
    <citation type="submission" date="2003-03" db="EMBL/GenBank/DDBJ databases">
        <title>The complete genome sequence of Neisseria gonorrhoeae.</title>
        <authorList>
            <person name="Lewis L.A."/>
            <person name="Gillaspy A.F."/>
            <person name="McLaughlin R.E."/>
            <person name="Gipson M."/>
            <person name="Ducey T.F."/>
            <person name="Ownbey T."/>
            <person name="Hartman K."/>
            <person name="Nydick C."/>
            <person name="Carson M.B."/>
            <person name="Vaughn J."/>
            <person name="Thomson C."/>
            <person name="Song L."/>
            <person name="Lin S."/>
            <person name="Yuan X."/>
            <person name="Najar F."/>
            <person name="Zhan M."/>
            <person name="Ren Q."/>
            <person name="Zhu H."/>
            <person name="Qi S."/>
            <person name="Kenton S.M."/>
            <person name="Lai H."/>
            <person name="White J.D."/>
            <person name="Clifton S."/>
            <person name="Roe B.A."/>
            <person name="Dyer D.W."/>
        </authorList>
    </citation>
    <scope>NUCLEOTIDE SEQUENCE [LARGE SCALE GENOMIC DNA]</scope>
    <source>
        <strain>ATCC 700825 / FA 1090</strain>
    </source>
</reference>
<keyword id="KW-1185">Reference proteome</keyword>
<keyword id="KW-0687">Ribonucleoprotein</keyword>
<keyword id="KW-0689">Ribosomal protein</keyword>
<keyword id="KW-0694">RNA-binding</keyword>
<keyword id="KW-0699">rRNA-binding</keyword>
<feature type="chain" id="PRO_0000266509" description="Large ribosomal subunit protein uL14">
    <location>
        <begin position="1"/>
        <end position="122"/>
    </location>
</feature>
<comment type="function">
    <text evidence="1">Binds to 23S rRNA. Forms part of two intersubunit bridges in the 70S ribosome.</text>
</comment>
<comment type="subunit">
    <text evidence="1">Part of the 50S ribosomal subunit. Forms a cluster with proteins L3 and L19. In the 70S ribosome, L14 and L19 interact and together make contacts with the 16S rRNA in bridges B5 and B8.</text>
</comment>
<comment type="similarity">
    <text evidence="1">Belongs to the universal ribosomal protein uL14 family.</text>
</comment>
<name>RL14_NEIG1</name>
<sequence length="122" mass="13403">MIQMQTILDVADNSGARRVMCIKVLGGSKRRYASVGDIIKVAVKDAVPRGRVKKGDVYNAVVVRTAKGVRRPDGALIKFDNNAAVLLNNKLEPLGTRIFGPVTRELRTERFMKIVSLAPEVL</sequence>
<accession>Q5F5T7</accession>
<proteinExistence type="inferred from homology"/>
<gene>
    <name evidence="1" type="primary">rplN</name>
    <name type="ordered locus">NGO_1829</name>
</gene>